<accession>Q92D11</accession>
<sequence>MEQMDAHQIISFIQNSKKATPVKVYLKGDLEKIDFPSDVKTFITGNAGTIFGEWAVVEPLLEANKANIEDYVIENDRRNSAIPLLDMKNINARIEPGAVIRDQVTIGDNAVIMMGASINIGSVIGDGTMIDMNVVLGGRATVGKNCHIGAGSVLAGVVEPPSAQPVIVEDNVVVGANVVVLEGVRIGEGAVVAAGAIVTKDVAPGTVVAGIPARELKKLDAKTASKTEIMQELRQL</sequence>
<dbReference type="EC" id="2.3.1.89" evidence="1"/>
<dbReference type="EMBL" id="AL596167">
    <property type="protein sequence ID" value="CAC96241.1"/>
    <property type="molecule type" value="Genomic_DNA"/>
</dbReference>
<dbReference type="PIR" id="AI1558">
    <property type="entry name" value="AI1558"/>
</dbReference>
<dbReference type="SMR" id="Q92D11"/>
<dbReference type="STRING" id="272626.gene:17565340"/>
<dbReference type="KEGG" id="lin:lin1010"/>
<dbReference type="eggNOG" id="COG2171">
    <property type="taxonomic scope" value="Bacteria"/>
</dbReference>
<dbReference type="HOGENOM" id="CLU_103751_0_0_9"/>
<dbReference type="OrthoDB" id="9788080at2"/>
<dbReference type="UniPathway" id="UPA00034">
    <property type="reaction ID" value="UER00022"/>
</dbReference>
<dbReference type="Proteomes" id="UP000002513">
    <property type="component" value="Chromosome"/>
</dbReference>
<dbReference type="GO" id="GO:0047200">
    <property type="term" value="F:tetrahydrodipicolinate N-acetyltransferase activity"/>
    <property type="evidence" value="ECO:0007669"/>
    <property type="project" value="UniProtKB-EC"/>
</dbReference>
<dbReference type="GO" id="GO:0019877">
    <property type="term" value="P:diaminopimelate biosynthetic process"/>
    <property type="evidence" value="ECO:0007669"/>
    <property type="project" value="UniProtKB-UniRule"/>
</dbReference>
<dbReference type="GO" id="GO:0009089">
    <property type="term" value="P:lysine biosynthetic process via diaminopimelate"/>
    <property type="evidence" value="ECO:0007669"/>
    <property type="project" value="UniProtKB-UniRule"/>
</dbReference>
<dbReference type="Gene3D" id="2.160.10.10">
    <property type="entry name" value="Hexapeptide repeat proteins"/>
    <property type="match status" value="1"/>
</dbReference>
<dbReference type="Gene3D" id="3.30.70.250">
    <property type="entry name" value="Malonyl-CoA ACP transacylase, ACP-binding"/>
    <property type="match status" value="1"/>
</dbReference>
<dbReference type="HAMAP" id="MF_01691">
    <property type="entry name" value="DapH"/>
    <property type="match status" value="1"/>
</dbReference>
<dbReference type="InterPro" id="IPR019873">
    <property type="entry name" value="DapH"/>
</dbReference>
<dbReference type="InterPro" id="IPR013710">
    <property type="entry name" value="DapH_N"/>
</dbReference>
<dbReference type="InterPro" id="IPR001451">
    <property type="entry name" value="Hexapep"/>
</dbReference>
<dbReference type="InterPro" id="IPR018357">
    <property type="entry name" value="Hexapep_transf_CS"/>
</dbReference>
<dbReference type="InterPro" id="IPR050179">
    <property type="entry name" value="Trans_hexapeptide_repeat"/>
</dbReference>
<dbReference type="InterPro" id="IPR011004">
    <property type="entry name" value="Trimer_LpxA-like_sf"/>
</dbReference>
<dbReference type="NCBIfam" id="TIGR03532">
    <property type="entry name" value="DapD_Ac"/>
    <property type="match status" value="1"/>
</dbReference>
<dbReference type="PANTHER" id="PTHR43300:SF10">
    <property type="entry name" value="2,3,4,5-TETRAHYDROPYRIDINE-2,6-DICARBOXYLATE N-ACETYLTRANSFERASE"/>
    <property type="match status" value="1"/>
</dbReference>
<dbReference type="PANTHER" id="PTHR43300">
    <property type="entry name" value="ACETYLTRANSFERASE"/>
    <property type="match status" value="1"/>
</dbReference>
<dbReference type="Pfam" id="PF08503">
    <property type="entry name" value="DapH_N"/>
    <property type="match status" value="1"/>
</dbReference>
<dbReference type="Pfam" id="PF00132">
    <property type="entry name" value="Hexapep"/>
    <property type="match status" value="1"/>
</dbReference>
<dbReference type="Pfam" id="PF14602">
    <property type="entry name" value="Hexapep_2"/>
    <property type="match status" value="1"/>
</dbReference>
<dbReference type="SUPFAM" id="SSF51161">
    <property type="entry name" value="Trimeric LpxA-like enzymes"/>
    <property type="match status" value="1"/>
</dbReference>
<dbReference type="PROSITE" id="PS00101">
    <property type="entry name" value="HEXAPEP_TRANSFERASES"/>
    <property type="match status" value="1"/>
</dbReference>
<feature type="chain" id="PRO_0000376676" description="2,3,4,5-tetrahydropyridine-2,6-dicarboxylate N-acetyltransferase">
    <location>
        <begin position="1"/>
        <end position="236"/>
    </location>
</feature>
<organism>
    <name type="scientific">Listeria innocua serovar 6a (strain ATCC BAA-680 / CLIP 11262)</name>
    <dbReference type="NCBI Taxonomy" id="272626"/>
    <lineage>
        <taxon>Bacteria</taxon>
        <taxon>Bacillati</taxon>
        <taxon>Bacillota</taxon>
        <taxon>Bacilli</taxon>
        <taxon>Bacillales</taxon>
        <taxon>Listeriaceae</taxon>
        <taxon>Listeria</taxon>
    </lineage>
</organism>
<reference key="1">
    <citation type="journal article" date="2001" name="Science">
        <title>Comparative genomics of Listeria species.</title>
        <authorList>
            <person name="Glaser P."/>
            <person name="Frangeul L."/>
            <person name="Buchrieser C."/>
            <person name="Rusniok C."/>
            <person name="Amend A."/>
            <person name="Baquero F."/>
            <person name="Berche P."/>
            <person name="Bloecker H."/>
            <person name="Brandt P."/>
            <person name="Chakraborty T."/>
            <person name="Charbit A."/>
            <person name="Chetouani F."/>
            <person name="Couve E."/>
            <person name="de Daruvar A."/>
            <person name="Dehoux P."/>
            <person name="Domann E."/>
            <person name="Dominguez-Bernal G."/>
            <person name="Duchaud E."/>
            <person name="Durant L."/>
            <person name="Dussurget O."/>
            <person name="Entian K.-D."/>
            <person name="Fsihi H."/>
            <person name="Garcia-del Portillo F."/>
            <person name="Garrido P."/>
            <person name="Gautier L."/>
            <person name="Goebel W."/>
            <person name="Gomez-Lopez N."/>
            <person name="Hain T."/>
            <person name="Hauf J."/>
            <person name="Jackson D."/>
            <person name="Jones L.-M."/>
            <person name="Kaerst U."/>
            <person name="Kreft J."/>
            <person name="Kuhn M."/>
            <person name="Kunst F."/>
            <person name="Kurapkat G."/>
            <person name="Madueno E."/>
            <person name="Maitournam A."/>
            <person name="Mata Vicente J."/>
            <person name="Ng E."/>
            <person name="Nedjari H."/>
            <person name="Nordsiek G."/>
            <person name="Novella S."/>
            <person name="de Pablos B."/>
            <person name="Perez-Diaz J.-C."/>
            <person name="Purcell R."/>
            <person name="Remmel B."/>
            <person name="Rose M."/>
            <person name="Schlueter T."/>
            <person name="Simoes N."/>
            <person name="Tierrez A."/>
            <person name="Vazquez-Boland J.-A."/>
            <person name="Voss H."/>
            <person name="Wehland J."/>
            <person name="Cossart P."/>
        </authorList>
    </citation>
    <scope>NUCLEOTIDE SEQUENCE [LARGE SCALE GENOMIC DNA]</scope>
    <source>
        <strain>ATCC BAA-680 / CLIP 11262</strain>
    </source>
</reference>
<keyword id="KW-0012">Acyltransferase</keyword>
<keyword id="KW-0028">Amino-acid biosynthesis</keyword>
<keyword id="KW-0220">Diaminopimelate biosynthesis</keyword>
<keyword id="KW-0457">Lysine biosynthesis</keyword>
<keyword id="KW-0677">Repeat</keyword>
<keyword id="KW-0808">Transferase</keyword>
<gene>
    <name evidence="1" type="primary">dapH</name>
    <name type="ordered locus">lin1010</name>
</gene>
<evidence type="ECO:0000255" key="1">
    <source>
        <dbReference type="HAMAP-Rule" id="MF_01691"/>
    </source>
</evidence>
<name>DAPH_LISIN</name>
<comment type="function">
    <text evidence="1">Catalyzes the transfer of an acetyl group from acetyl-CoA to tetrahydrodipicolinate.</text>
</comment>
<comment type="catalytic activity">
    <reaction evidence="1">
        <text>(S)-2,3,4,5-tetrahydrodipicolinate + acetyl-CoA + H2O = L-2-acetamido-6-oxoheptanedioate + CoA</text>
        <dbReference type="Rhea" id="RHEA:13085"/>
        <dbReference type="ChEBI" id="CHEBI:15377"/>
        <dbReference type="ChEBI" id="CHEBI:16845"/>
        <dbReference type="ChEBI" id="CHEBI:57287"/>
        <dbReference type="ChEBI" id="CHEBI:57288"/>
        <dbReference type="ChEBI" id="CHEBI:58117"/>
        <dbReference type="EC" id="2.3.1.89"/>
    </reaction>
</comment>
<comment type="pathway">
    <text evidence="1">Amino-acid biosynthesis; L-lysine biosynthesis via DAP pathway; LL-2,6-diaminopimelate from (S)-tetrahydrodipicolinate (acetylase route): step 1/3.</text>
</comment>
<comment type="similarity">
    <text evidence="1">Belongs to the transferase hexapeptide repeat family. DapH subfamily.</text>
</comment>
<protein>
    <recommendedName>
        <fullName evidence="1">2,3,4,5-tetrahydropyridine-2,6-dicarboxylate N-acetyltransferase</fullName>
        <ecNumber evidence="1">2.3.1.89</ecNumber>
    </recommendedName>
    <alternativeName>
        <fullName evidence="1">Tetrahydrodipicolinate N-acetyltransferase</fullName>
        <shortName evidence="1">THP acetyltransferase</shortName>
        <shortName evidence="1">Tetrahydropicolinate acetylase</shortName>
    </alternativeName>
</protein>
<proteinExistence type="inferred from homology"/>